<proteinExistence type="predicted"/>
<organism>
    <name type="scientific">Vaccinia virus (strain Copenhagen)</name>
    <name type="common">VACV</name>
    <dbReference type="NCBI Taxonomy" id="10249"/>
    <lineage>
        <taxon>Viruses</taxon>
        <taxon>Varidnaviria</taxon>
        <taxon>Bamfordvirae</taxon>
        <taxon>Nucleocytoviricota</taxon>
        <taxon>Pokkesviricetes</taxon>
        <taxon>Chitovirales</taxon>
        <taxon>Poxviridae</taxon>
        <taxon>Chordopoxvirinae</taxon>
        <taxon>Orthopoxvirus</taxon>
        <taxon>Vaccinia virus</taxon>
    </lineage>
</organism>
<organismHost>
    <name type="scientific">Homo sapiens</name>
    <name type="common">Human</name>
    <dbReference type="NCBI Taxonomy" id="9606"/>
</organismHost>
<protein>
    <recommendedName>
        <fullName>Uncharacterized 7.4 kDa protein</fullName>
    </recommendedName>
</protein>
<feature type="chain" id="PRO_0000099677" description="Uncharacterized 7.4 kDa protein">
    <location>
        <begin position="1"/>
        <end position="70"/>
    </location>
</feature>
<gene>
    <name type="ORF">B ORF H</name>
</gene>
<gene>
    <name type="ORF">C ORF G</name>
</gene>
<name>YVBH_VACCC</name>
<keyword id="KW-1185">Reference proteome</keyword>
<reference key="1">
    <citation type="journal article" date="1990" name="Virology">
        <title>The complete DNA sequence of vaccinia virus.</title>
        <authorList>
            <person name="Goebel S.J."/>
            <person name="Johnson G.P."/>
            <person name="Perkus M.E."/>
            <person name="Davis S.W."/>
            <person name="Winslow J.P."/>
            <person name="Paoletti E."/>
        </authorList>
    </citation>
    <scope>NUCLEOTIDE SEQUENCE [LARGE SCALE GENOMIC DNA]</scope>
</reference>
<reference key="2">
    <citation type="journal article" date="1990" name="Virology">
        <title>Appendix to 'The complete DNA sequence of vaccinia virus'.</title>
        <authorList>
            <person name="Goebel S.J."/>
            <person name="Johnson G.P."/>
            <person name="Perkus M.E."/>
            <person name="Davis S.W."/>
            <person name="Winslow J.P."/>
            <person name="Paoletti E."/>
        </authorList>
    </citation>
    <scope>COMPLETE GENOME</scope>
</reference>
<accession>P20548</accession>
<sequence>MLDPSTGWVLMSLSFSSSLHLMSIDTSQSLIIARASSRVIAGESLPCPGDTLDNLAFTVFPSADSEMDLI</sequence>
<dbReference type="EMBL" id="M35027">
    <property type="protein sequence ID" value="AAA48230.1"/>
    <property type="molecule type" value="Genomic_DNA"/>
</dbReference>
<dbReference type="EMBL" id="M35027">
    <property type="protein sequence ID" value="AAA47972.1"/>
    <property type="molecule type" value="Genomic_DNA"/>
</dbReference>
<dbReference type="PIR" id="B33172">
    <property type="entry name" value="B33172"/>
</dbReference>
<dbReference type="Proteomes" id="UP000008269">
    <property type="component" value="Segment"/>
</dbReference>